<sequence length="185" mass="20761">MKLIVALGNPGLKYEKTKHNTGFMALDHYLDEKGLRLDRDKFTALYAKEKVAGEDVIFMEPQTYMNESGRAVGAAAKFFKIDPSDILVIHDDMDMPIAKLRIRAGGKSGGHNGIKSIIACLGTEKFNRLKIGIRHPDKQSVVSWVLTPFNPDQQKELEASFAKVDQIIDDFIAGKDAQYLMNRYN</sequence>
<evidence type="ECO:0000255" key="1">
    <source>
        <dbReference type="HAMAP-Rule" id="MF_00083"/>
    </source>
</evidence>
<gene>
    <name evidence="1" type="primary">pth</name>
    <name type="ordered locus">LBUL_0317</name>
</gene>
<reference key="1">
    <citation type="journal article" date="2006" name="Proc. Natl. Acad. Sci. U.S.A.">
        <title>Comparative genomics of the lactic acid bacteria.</title>
        <authorList>
            <person name="Makarova K.S."/>
            <person name="Slesarev A."/>
            <person name="Wolf Y.I."/>
            <person name="Sorokin A."/>
            <person name="Mirkin B."/>
            <person name="Koonin E.V."/>
            <person name="Pavlov A."/>
            <person name="Pavlova N."/>
            <person name="Karamychev V."/>
            <person name="Polouchine N."/>
            <person name="Shakhova V."/>
            <person name="Grigoriev I."/>
            <person name="Lou Y."/>
            <person name="Rohksar D."/>
            <person name="Lucas S."/>
            <person name="Huang K."/>
            <person name="Goodstein D.M."/>
            <person name="Hawkins T."/>
            <person name="Plengvidhya V."/>
            <person name="Welker D."/>
            <person name="Hughes J."/>
            <person name="Goh Y."/>
            <person name="Benson A."/>
            <person name="Baldwin K."/>
            <person name="Lee J.-H."/>
            <person name="Diaz-Muniz I."/>
            <person name="Dosti B."/>
            <person name="Smeianov V."/>
            <person name="Wechter W."/>
            <person name="Barabote R."/>
            <person name="Lorca G."/>
            <person name="Altermann E."/>
            <person name="Barrangou R."/>
            <person name="Ganesan B."/>
            <person name="Xie Y."/>
            <person name="Rawsthorne H."/>
            <person name="Tamir D."/>
            <person name="Parker C."/>
            <person name="Breidt F."/>
            <person name="Broadbent J.R."/>
            <person name="Hutkins R."/>
            <person name="O'Sullivan D."/>
            <person name="Steele J."/>
            <person name="Unlu G."/>
            <person name="Saier M.H. Jr."/>
            <person name="Klaenhammer T."/>
            <person name="Richardson P."/>
            <person name="Kozyavkin S."/>
            <person name="Weimer B.C."/>
            <person name="Mills D.A."/>
        </authorList>
    </citation>
    <scope>NUCLEOTIDE SEQUENCE [LARGE SCALE GENOMIC DNA]</scope>
    <source>
        <strain>ATCC BAA-365 / Lb-18</strain>
    </source>
</reference>
<keyword id="KW-0963">Cytoplasm</keyword>
<keyword id="KW-0378">Hydrolase</keyword>
<keyword id="KW-0694">RNA-binding</keyword>
<keyword id="KW-0820">tRNA-binding</keyword>
<comment type="function">
    <text evidence="1">Hydrolyzes ribosome-free peptidyl-tRNAs (with 1 or more amino acids incorporated), which drop off the ribosome during protein synthesis, or as a result of ribosome stalling.</text>
</comment>
<comment type="function">
    <text evidence="1">Catalyzes the release of premature peptidyl moieties from peptidyl-tRNA molecules trapped in stalled 50S ribosomal subunits, and thus maintains levels of free tRNAs and 50S ribosomes.</text>
</comment>
<comment type="catalytic activity">
    <reaction evidence="1">
        <text>an N-acyl-L-alpha-aminoacyl-tRNA + H2O = an N-acyl-L-amino acid + a tRNA + H(+)</text>
        <dbReference type="Rhea" id="RHEA:54448"/>
        <dbReference type="Rhea" id="RHEA-COMP:10123"/>
        <dbReference type="Rhea" id="RHEA-COMP:13883"/>
        <dbReference type="ChEBI" id="CHEBI:15377"/>
        <dbReference type="ChEBI" id="CHEBI:15378"/>
        <dbReference type="ChEBI" id="CHEBI:59874"/>
        <dbReference type="ChEBI" id="CHEBI:78442"/>
        <dbReference type="ChEBI" id="CHEBI:138191"/>
        <dbReference type="EC" id="3.1.1.29"/>
    </reaction>
</comment>
<comment type="subunit">
    <text evidence="1">Monomer.</text>
</comment>
<comment type="subcellular location">
    <subcellularLocation>
        <location evidence="1">Cytoplasm</location>
    </subcellularLocation>
</comment>
<comment type="similarity">
    <text evidence="1">Belongs to the PTH family.</text>
</comment>
<feature type="chain" id="PRO_1000010600" description="Peptidyl-tRNA hydrolase">
    <location>
        <begin position="1"/>
        <end position="185"/>
    </location>
</feature>
<feature type="active site" description="Proton acceptor" evidence="1">
    <location>
        <position position="19"/>
    </location>
</feature>
<feature type="binding site" evidence="1">
    <location>
        <position position="14"/>
    </location>
    <ligand>
        <name>tRNA</name>
        <dbReference type="ChEBI" id="CHEBI:17843"/>
    </ligand>
</feature>
<feature type="binding site" evidence="1">
    <location>
        <position position="64"/>
    </location>
    <ligand>
        <name>tRNA</name>
        <dbReference type="ChEBI" id="CHEBI:17843"/>
    </ligand>
</feature>
<feature type="binding site" evidence="1">
    <location>
        <position position="66"/>
    </location>
    <ligand>
        <name>tRNA</name>
        <dbReference type="ChEBI" id="CHEBI:17843"/>
    </ligand>
</feature>
<feature type="binding site" evidence="1">
    <location>
        <position position="112"/>
    </location>
    <ligand>
        <name>tRNA</name>
        <dbReference type="ChEBI" id="CHEBI:17843"/>
    </ligand>
</feature>
<feature type="site" description="Discriminates between blocked and unblocked aminoacyl-tRNA" evidence="1">
    <location>
        <position position="9"/>
    </location>
</feature>
<feature type="site" description="Stabilizes the basic form of H active site to accept a proton" evidence="1">
    <location>
        <position position="91"/>
    </location>
</feature>
<organism>
    <name type="scientific">Lactobacillus delbrueckii subsp. bulgaricus (strain ATCC BAA-365 / Lb-18)</name>
    <dbReference type="NCBI Taxonomy" id="321956"/>
    <lineage>
        <taxon>Bacteria</taxon>
        <taxon>Bacillati</taxon>
        <taxon>Bacillota</taxon>
        <taxon>Bacilli</taxon>
        <taxon>Lactobacillales</taxon>
        <taxon>Lactobacillaceae</taxon>
        <taxon>Lactobacillus</taxon>
    </lineage>
</organism>
<accession>Q04C43</accession>
<dbReference type="EC" id="3.1.1.29" evidence="1"/>
<dbReference type="EMBL" id="CP000412">
    <property type="protein sequence ID" value="ABJ57979.1"/>
    <property type="molecule type" value="Genomic_DNA"/>
</dbReference>
<dbReference type="RefSeq" id="WP_003612856.1">
    <property type="nucleotide sequence ID" value="NC_008529.1"/>
</dbReference>
<dbReference type="SMR" id="Q04C43"/>
<dbReference type="KEGG" id="lbu:LBUL_0317"/>
<dbReference type="HOGENOM" id="CLU_062456_4_1_9"/>
<dbReference type="BioCyc" id="LDEL321956:LBUL_RS01485-MONOMER"/>
<dbReference type="GO" id="GO:0005737">
    <property type="term" value="C:cytoplasm"/>
    <property type="evidence" value="ECO:0007669"/>
    <property type="project" value="UniProtKB-SubCell"/>
</dbReference>
<dbReference type="GO" id="GO:0004045">
    <property type="term" value="F:peptidyl-tRNA hydrolase activity"/>
    <property type="evidence" value="ECO:0007669"/>
    <property type="project" value="UniProtKB-UniRule"/>
</dbReference>
<dbReference type="GO" id="GO:0000049">
    <property type="term" value="F:tRNA binding"/>
    <property type="evidence" value="ECO:0007669"/>
    <property type="project" value="UniProtKB-UniRule"/>
</dbReference>
<dbReference type="GO" id="GO:0006515">
    <property type="term" value="P:protein quality control for misfolded or incompletely synthesized proteins"/>
    <property type="evidence" value="ECO:0007669"/>
    <property type="project" value="UniProtKB-UniRule"/>
</dbReference>
<dbReference type="GO" id="GO:0072344">
    <property type="term" value="P:rescue of stalled ribosome"/>
    <property type="evidence" value="ECO:0007669"/>
    <property type="project" value="UniProtKB-UniRule"/>
</dbReference>
<dbReference type="CDD" id="cd00462">
    <property type="entry name" value="PTH"/>
    <property type="match status" value="1"/>
</dbReference>
<dbReference type="FunFam" id="3.40.50.1470:FF:000001">
    <property type="entry name" value="Peptidyl-tRNA hydrolase"/>
    <property type="match status" value="1"/>
</dbReference>
<dbReference type="Gene3D" id="3.40.50.1470">
    <property type="entry name" value="Peptidyl-tRNA hydrolase"/>
    <property type="match status" value="1"/>
</dbReference>
<dbReference type="HAMAP" id="MF_00083">
    <property type="entry name" value="Pept_tRNA_hydro_bact"/>
    <property type="match status" value="1"/>
</dbReference>
<dbReference type="InterPro" id="IPR001328">
    <property type="entry name" value="Pept_tRNA_hydro"/>
</dbReference>
<dbReference type="InterPro" id="IPR018171">
    <property type="entry name" value="Pept_tRNA_hydro_CS"/>
</dbReference>
<dbReference type="InterPro" id="IPR036416">
    <property type="entry name" value="Pept_tRNA_hydro_sf"/>
</dbReference>
<dbReference type="NCBIfam" id="TIGR00447">
    <property type="entry name" value="pth"/>
    <property type="match status" value="1"/>
</dbReference>
<dbReference type="PANTHER" id="PTHR17224">
    <property type="entry name" value="PEPTIDYL-TRNA HYDROLASE"/>
    <property type="match status" value="1"/>
</dbReference>
<dbReference type="PANTHER" id="PTHR17224:SF1">
    <property type="entry name" value="PEPTIDYL-TRNA HYDROLASE"/>
    <property type="match status" value="1"/>
</dbReference>
<dbReference type="Pfam" id="PF01195">
    <property type="entry name" value="Pept_tRNA_hydro"/>
    <property type="match status" value="1"/>
</dbReference>
<dbReference type="SUPFAM" id="SSF53178">
    <property type="entry name" value="Peptidyl-tRNA hydrolase-like"/>
    <property type="match status" value="1"/>
</dbReference>
<dbReference type="PROSITE" id="PS01195">
    <property type="entry name" value="PEPT_TRNA_HYDROL_1"/>
    <property type="match status" value="1"/>
</dbReference>
<proteinExistence type="inferred from homology"/>
<name>PTH_LACDB</name>
<protein>
    <recommendedName>
        <fullName evidence="1">Peptidyl-tRNA hydrolase</fullName>
        <shortName evidence="1">Pth</shortName>
        <ecNumber evidence="1">3.1.1.29</ecNumber>
    </recommendedName>
</protein>